<organism>
    <name type="scientific">Bartonella bacilliformis (strain ATCC 35685 / KC583 / Herrer 020/F12,63)</name>
    <dbReference type="NCBI Taxonomy" id="360095"/>
    <lineage>
        <taxon>Bacteria</taxon>
        <taxon>Pseudomonadati</taxon>
        <taxon>Pseudomonadota</taxon>
        <taxon>Alphaproteobacteria</taxon>
        <taxon>Hyphomicrobiales</taxon>
        <taxon>Bartonellaceae</taxon>
        <taxon>Bartonella</taxon>
    </lineage>
</organism>
<reference key="1">
    <citation type="submission" date="2006-12" db="EMBL/GenBank/DDBJ databases">
        <authorList>
            <person name="Hendrix L."/>
            <person name="Mohamoud Y."/>
            <person name="Radune D."/>
            <person name="Shvartsbeyn A."/>
            <person name="Daugherty S."/>
            <person name="Dodson R."/>
            <person name="Durkin A.S."/>
            <person name="Harkins D."/>
            <person name="Huot H."/>
            <person name="Kothari S.P."/>
            <person name="Madupu R."/>
            <person name="Li J."/>
            <person name="Nelson W.C."/>
            <person name="Shrivastava S."/>
            <person name="Giglio M.G."/>
            <person name="Haft D."/>
            <person name="Selengut J."/>
            <person name="Fraser-Ligget C."/>
            <person name="Seshadri R."/>
        </authorList>
    </citation>
    <scope>NUCLEOTIDE SEQUENCE [LARGE SCALE GENOMIC DNA]</scope>
    <source>
        <strain>ATCC 35685 / KC583 / Herrer 020/F12,63</strain>
    </source>
</reference>
<evidence type="ECO:0000255" key="1">
    <source>
        <dbReference type="HAMAP-Rule" id="MF_00017"/>
    </source>
</evidence>
<protein>
    <recommendedName>
        <fullName evidence="1">Recombination protein RecR</fullName>
    </recommendedName>
</protein>
<keyword id="KW-0227">DNA damage</keyword>
<keyword id="KW-0233">DNA recombination</keyword>
<keyword id="KW-0234">DNA repair</keyword>
<keyword id="KW-0479">Metal-binding</keyword>
<keyword id="KW-0862">Zinc</keyword>
<keyword id="KW-0863">Zinc-finger</keyword>
<name>RECR_BARBK</name>
<accession>A1UU36</accession>
<dbReference type="EMBL" id="CP000524">
    <property type="protein sequence ID" value="ABM44526.1"/>
    <property type="molecule type" value="Genomic_DNA"/>
</dbReference>
<dbReference type="RefSeq" id="WP_005767951.1">
    <property type="nucleotide sequence ID" value="NC_008783.1"/>
</dbReference>
<dbReference type="SMR" id="A1UU36"/>
<dbReference type="STRING" id="360095.BARBAKC583_1240"/>
<dbReference type="GeneID" id="4684704"/>
<dbReference type="KEGG" id="bbk:BARBAKC583_1240"/>
<dbReference type="PATRIC" id="fig|360095.6.peg.1216"/>
<dbReference type="eggNOG" id="COG0353">
    <property type="taxonomic scope" value="Bacteria"/>
</dbReference>
<dbReference type="HOGENOM" id="CLU_060739_1_1_5"/>
<dbReference type="OrthoDB" id="9802672at2"/>
<dbReference type="Proteomes" id="UP000000643">
    <property type="component" value="Chromosome"/>
</dbReference>
<dbReference type="GO" id="GO:0003677">
    <property type="term" value="F:DNA binding"/>
    <property type="evidence" value="ECO:0007669"/>
    <property type="project" value="UniProtKB-UniRule"/>
</dbReference>
<dbReference type="GO" id="GO:0008270">
    <property type="term" value="F:zinc ion binding"/>
    <property type="evidence" value="ECO:0007669"/>
    <property type="project" value="UniProtKB-KW"/>
</dbReference>
<dbReference type="GO" id="GO:0006310">
    <property type="term" value="P:DNA recombination"/>
    <property type="evidence" value="ECO:0007669"/>
    <property type="project" value="UniProtKB-UniRule"/>
</dbReference>
<dbReference type="GO" id="GO:0006281">
    <property type="term" value="P:DNA repair"/>
    <property type="evidence" value="ECO:0007669"/>
    <property type="project" value="UniProtKB-UniRule"/>
</dbReference>
<dbReference type="CDD" id="cd01025">
    <property type="entry name" value="TOPRIM_recR"/>
    <property type="match status" value="1"/>
</dbReference>
<dbReference type="Gene3D" id="3.30.60.80">
    <property type="match status" value="1"/>
</dbReference>
<dbReference type="Gene3D" id="3.40.1360.10">
    <property type="match status" value="1"/>
</dbReference>
<dbReference type="Gene3D" id="6.10.250.240">
    <property type="match status" value="1"/>
</dbReference>
<dbReference type="Gene3D" id="1.10.8.420">
    <property type="entry name" value="RecR Domain 1"/>
    <property type="match status" value="1"/>
</dbReference>
<dbReference type="HAMAP" id="MF_00017">
    <property type="entry name" value="RecR"/>
    <property type="match status" value="1"/>
</dbReference>
<dbReference type="InterPro" id="IPR000093">
    <property type="entry name" value="DNA_Rcmb_RecR"/>
</dbReference>
<dbReference type="InterPro" id="IPR023627">
    <property type="entry name" value="Rcmb_RecR"/>
</dbReference>
<dbReference type="InterPro" id="IPR015967">
    <property type="entry name" value="Rcmb_RecR_Znf"/>
</dbReference>
<dbReference type="InterPro" id="IPR006171">
    <property type="entry name" value="TOPRIM_dom"/>
</dbReference>
<dbReference type="InterPro" id="IPR034137">
    <property type="entry name" value="TOPRIM_RecR"/>
</dbReference>
<dbReference type="NCBIfam" id="TIGR00615">
    <property type="entry name" value="recR"/>
    <property type="match status" value="1"/>
</dbReference>
<dbReference type="PANTHER" id="PTHR30446">
    <property type="entry name" value="RECOMBINATION PROTEIN RECR"/>
    <property type="match status" value="1"/>
</dbReference>
<dbReference type="PANTHER" id="PTHR30446:SF0">
    <property type="entry name" value="RECOMBINATION PROTEIN RECR"/>
    <property type="match status" value="1"/>
</dbReference>
<dbReference type="Pfam" id="PF21175">
    <property type="entry name" value="RecR_C"/>
    <property type="match status" value="1"/>
</dbReference>
<dbReference type="Pfam" id="PF21176">
    <property type="entry name" value="RecR_HhH"/>
    <property type="match status" value="1"/>
</dbReference>
<dbReference type="Pfam" id="PF02132">
    <property type="entry name" value="RecR_ZnF"/>
    <property type="match status" value="1"/>
</dbReference>
<dbReference type="Pfam" id="PF13662">
    <property type="entry name" value="Toprim_4"/>
    <property type="match status" value="1"/>
</dbReference>
<dbReference type="SMART" id="SM00493">
    <property type="entry name" value="TOPRIM"/>
    <property type="match status" value="1"/>
</dbReference>
<dbReference type="SUPFAM" id="SSF111304">
    <property type="entry name" value="Recombination protein RecR"/>
    <property type="match status" value="1"/>
</dbReference>
<dbReference type="PROSITE" id="PS01300">
    <property type="entry name" value="RECR"/>
    <property type="match status" value="1"/>
</dbReference>
<dbReference type="PROSITE" id="PS50880">
    <property type="entry name" value="TOPRIM"/>
    <property type="match status" value="1"/>
</dbReference>
<gene>
    <name evidence="1" type="primary">recR</name>
    <name type="ordered locus">BARBAKC583_1240</name>
</gene>
<proteinExistence type="inferred from homology"/>
<sequence length="201" mass="21795">MAKHITGPEIERLIHLLARIPGLGPRSARRAALHLIKKKEALLEPLGTAIRDAVDKVRICSVCGNIDTTDPCSICTDPRRDNGTIIVVEDISDLWALERAGTLLARYHVLGGRLSPLDGIGPDELNITSLINRVIKDPITEIILAVNATIEGQTTAHYITDQLSNFSIKITRLAHGVPVGGELDYLDDGTLAAALRARTNF</sequence>
<feature type="chain" id="PRO_1000001511" description="Recombination protein RecR">
    <location>
        <begin position="1"/>
        <end position="201"/>
    </location>
</feature>
<feature type="domain" description="Toprim" evidence="1">
    <location>
        <begin position="83"/>
        <end position="178"/>
    </location>
</feature>
<feature type="zinc finger region" description="C4-type" evidence="1">
    <location>
        <begin position="60"/>
        <end position="75"/>
    </location>
</feature>
<comment type="function">
    <text evidence="1">May play a role in DNA repair. It seems to be involved in an RecBC-independent recombinational process of DNA repair. It may act with RecF and RecO.</text>
</comment>
<comment type="similarity">
    <text evidence="1">Belongs to the RecR family.</text>
</comment>